<feature type="chain" id="PRO_0000165063" description="Single-stranded DNA-binding protein">
    <location>
        <begin position="1"/>
        <end position="117" status="greater than"/>
    </location>
</feature>
<feature type="region of interest" description="LAST" evidence="1">
    <location>
        <begin position="3"/>
        <end position="7"/>
    </location>
</feature>
<feature type="binding site" evidence="1">
    <location>
        <position position="65"/>
    </location>
    <ligand>
        <name>Zn(2+)</name>
        <dbReference type="ChEBI" id="CHEBI:29105"/>
    </ligand>
</feature>
<feature type="binding site" evidence="1">
    <location>
        <position position="78"/>
    </location>
    <ligand>
        <name>Zn(2+)</name>
        <dbReference type="ChEBI" id="CHEBI:29105"/>
    </ligand>
</feature>
<feature type="binding site" evidence="1">
    <location>
        <position position="88"/>
    </location>
    <ligand>
        <name>Zn(2+)</name>
        <dbReference type="ChEBI" id="CHEBI:29105"/>
    </ligand>
</feature>
<feature type="binding site" evidence="1">
    <location>
        <position position="91"/>
    </location>
    <ligand>
        <name>Zn(2+)</name>
        <dbReference type="ChEBI" id="CHEBI:29105"/>
    </ligand>
</feature>
<feature type="non-terminal residue">
    <location>
        <position position="117"/>
    </location>
</feature>
<protein>
    <recommendedName>
        <fullName>Single-stranded DNA-binding protein</fullName>
        <shortName>SSB protein</shortName>
    </recommendedName>
    <alternativeName>
        <fullName>Gp32</fullName>
    </alternativeName>
    <alternativeName>
        <fullName>Helix-destabilizing protein</fullName>
    </alternativeName>
</protein>
<evidence type="ECO:0000250" key="1">
    <source>
        <dbReference type="UniProtKB" id="P03695"/>
    </source>
</evidence>
<evidence type="ECO:0000305" key="2"/>
<name>SSB_BPR70</name>
<organism>
    <name type="scientific">Enterobacteria phage RB70</name>
    <name type="common">Bacteriophage RB70</name>
    <dbReference type="NCBI Taxonomy" id="36338"/>
    <lineage>
        <taxon>Viruses</taxon>
        <taxon>Duplodnaviria</taxon>
        <taxon>Heunggongvirae</taxon>
        <taxon>Uroviricota</taxon>
        <taxon>Caudoviricetes</taxon>
        <taxon>Straboviridae</taxon>
        <taxon>Tevenvirinae</taxon>
        <taxon>Tequatrovirus</taxon>
    </lineage>
</organism>
<keyword id="KW-0227">DNA damage</keyword>
<keyword id="KW-0233">DNA recombination</keyword>
<keyword id="KW-0234">DNA repair</keyword>
<keyword id="KW-0235">DNA replication</keyword>
<keyword id="KW-0238">DNA-binding</keyword>
<keyword id="KW-0479">Metal-binding</keyword>
<keyword id="KW-0678">Repressor</keyword>
<keyword id="KW-1194">Viral DNA replication</keyword>
<keyword id="KW-0862">Zinc</keyword>
<proteinExistence type="inferred from homology"/>
<reference key="1">
    <citation type="submission" date="1997-11" db="EMBL/GenBank/DDBJ databases">
        <authorList>
            <person name="Theimer C.A."/>
            <person name="Krisch H.M."/>
            <person name="Giedroc D.P."/>
        </authorList>
    </citation>
    <scope>NUCLEOTIDE SEQUENCE [GENOMIC DNA]</scope>
</reference>
<dbReference type="EMBL" id="AF033317">
    <property type="protein sequence ID" value="AAB87483.1"/>
    <property type="molecule type" value="Genomic_DNA"/>
</dbReference>
<dbReference type="SMR" id="O21945"/>
<dbReference type="GO" id="GO:0046872">
    <property type="term" value="F:metal ion binding"/>
    <property type="evidence" value="ECO:0007669"/>
    <property type="project" value="UniProtKB-KW"/>
</dbReference>
<dbReference type="GO" id="GO:0003697">
    <property type="term" value="F:single-stranded DNA binding"/>
    <property type="evidence" value="ECO:0007669"/>
    <property type="project" value="InterPro"/>
</dbReference>
<dbReference type="GO" id="GO:0006310">
    <property type="term" value="P:DNA recombination"/>
    <property type="evidence" value="ECO:0007669"/>
    <property type="project" value="UniProtKB-KW"/>
</dbReference>
<dbReference type="GO" id="GO:0006281">
    <property type="term" value="P:DNA repair"/>
    <property type="evidence" value="ECO:0007669"/>
    <property type="project" value="UniProtKB-KW"/>
</dbReference>
<dbReference type="GO" id="GO:0006260">
    <property type="term" value="P:DNA replication"/>
    <property type="evidence" value="ECO:0007669"/>
    <property type="project" value="UniProtKB-KW"/>
</dbReference>
<dbReference type="GO" id="GO:0039693">
    <property type="term" value="P:viral DNA genome replication"/>
    <property type="evidence" value="ECO:0007669"/>
    <property type="project" value="UniProtKB-KW"/>
</dbReference>
<dbReference type="Gene3D" id="3.90.198.10">
    <property type="entry name" value="Replication Fork Single-Stranded Dna Binding Protein"/>
    <property type="match status" value="1"/>
</dbReference>
<dbReference type="InterPro" id="IPR012340">
    <property type="entry name" value="NA-bd_OB-fold"/>
</dbReference>
<dbReference type="InterPro" id="IPR012339">
    <property type="entry name" value="Phage_T4_Gp32_ssDNA-bd"/>
</dbReference>
<dbReference type="InterPro" id="IPR044947">
    <property type="entry name" value="Phage_T4_Gp32_ssDNA-bd_sf"/>
</dbReference>
<dbReference type="Pfam" id="PF08804">
    <property type="entry name" value="gp32"/>
    <property type="match status" value="1"/>
</dbReference>
<dbReference type="SUPFAM" id="SSF50249">
    <property type="entry name" value="Nucleic acid-binding proteins"/>
    <property type="match status" value="1"/>
</dbReference>
<accession>O21945</accession>
<comment type="function">
    <text evidence="1">Single-stranded DNA-binding protein that participates in viral DNA replication, recombination, and repair. Coats the lagging-strand ssDNA as the replication fork advances. Stimulates the activities of viral DNA polymerase and DnaB-like SF4 replicative helicase, probably via its interaction with the helicase assembly factor. Together with DnaB-like SF4 replicative helicase and the helicase assembly factor, promotes pairing of two homologous DNA molecules containing complementary single-stranded regions and mediates homologous DNA strand exchange. Also promotes the formation of joint molecules. mRNA specific autogenous translational repressor.</text>
</comment>
<comment type="subunit">
    <text evidence="1">Homodimer in the absence of DNA, monomer when binding DNA. Interacts with the DNA helicase assembly protein; a ternary complex between the helicase assembly protein, the single-stranded DNA-binding protein and ssDNA is an obligatory intermediate in the helicase loading mechanism. Part of the replicase complex that includes the DNA polymerase, the polymerase clamp, the clamp loader complex, the single-stranded DNA binding protein, the primase, the DnaB-like SF4 replicative helicase and the helicase assembly factor. Interacts (via C-terminus) with the viral SF1 dDA helicase. Interacts with the viral SF2 UvsW repair helicase.</text>
</comment>
<comment type="domain">
    <text evidence="1">The acidic C-terminus is involved in modulating the ssDNA binding properties. The N-terminus LAST motif is involved in the cooperative binding of the protein to ssDNA.</text>
</comment>
<comment type="similarity">
    <text evidence="2">Belongs to the Tequatrovirus single-stranded DNA-binding protein family.</text>
</comment>
<organismHost>
    <name type="scientific">Escherichia coli</name>
    <dbReference type="NCBI Taxonomy" id="562"/>
</organismHost>
<sequence>MFKRKSTAELAAQMAKLAGNKGGFSSEDKGEWKLKLDNAGNGQAVIRFLPSKNDEQAPFAILVNHGFKKNGKWYIENCSSTHGDYDSCPVCQYISKNDLYNTDNKEYGLVKRKTSYW</sequence>
<gene>
    <name type="primary">32</name>
    <name type="synonym">ssb</name>
</gene>